<sequence length="1778" mass="199748">MDDKEPKRWPTLRDRLCSDGFLFPQYPIKPYHLKGIHRAVFYRDLEELKFVLLTRYDINKRDRKERTALHLACATGQPEMVHLLVSRRCELNLCDREDRTPLIKAVQLRQEACATLLLQNGADPNITDVFGRTALHYAVYNEDTSMIEKLLSYGANIEECSEDEYPPLFLAVSQRKVKMVEFLLKKKANINAVDYLGRSALIHAVTLGEKDIVILLLQHNIDVFSRDVYGKLAEDYASEAKNRVIFELIYEYERKKHEELSINSNPVSSQKQPALKATSGKEDSISNIATEIKDGQKSGTVSSQKQPALKGTSDKNDSVSNTATEIKDEQKSGTVSSQKQPALKDTSDKNDSVSNTATEIKDEQKSGTVLPAVEQCLNRSLYRPDAVAQPVTEDEFALESEIISKLYIPKRKIISPRSIEDVLPPVEEAVDRCLYLLDRFAQAVTKDKFALESENISEPYFTNRRTISQQSAEKLDAACGIDKTENGTLFEDQNVDKEGKALPATGQKANVSPEQPPLFTHTVKDSDHISTRFLGSMDSLTSSEESSERPPLSTLTLKEADPSSKAAMRRKDSPPPGKVSSQKQPAEKATSDDKDSVSNIATEIKEGPISGTVSSQKQPAEKATSDEKDSVSNIATEIKEGQQSGTVSPQKQSAWKVIFKKKVSLLNIATRITGGGKSGTVSSQKQPPSKATSDKTDSALNIATEIKDGLQCGTVSSQKQPALKATTDEEDSVSNIATEIKDGEKSGTVSSQKQPALKATTDEEDSVSIIATEIKDGEKSGTVSSRKKPALKATSDEKDSFSNITREKKDGEISRTVTSEKPAGLKATSDEEDSVLNIARGKEDGEKTRRVSSRKKPALKATSDEKDSFSNITREKKDGETSRTVSSQKPPALKATSDEEDSVLNIAREKKDGEKSRTVSSEKPSGLKATSDEKDSVLNIARGKKHGEKTRRVSSHKQPALKATSDKENSVPNMATETKDEQISGTVSSQKQPALKATSDKKDSVSNIPTEIKDGQQSGTVSSQKQLAWKATSVKKDSVSNIATEIKDGQIRGTVSSQRQPALKATGDEKDSVSNIAREIKDGEKSGTVSPQKQSAQKVIFKKKVSLLNIATRITGGWKSGTEYPENLPTLKATIENKNSVLNTATKMKDVQTSTPEQDLEMASEGEQKRLEEYENNQPQVKNQIHSRDDLDDIIQSSQTVSEDGDSLCCNCKNVILLIDQHEMKCKDCVHLLKIKKTFCLCKRLTELKDNHCEQLRVKIRKLKNKASVLQKRLSEKEEIKSQLKHETLELEKELCSLRFAIQQEKKKRRNVEELHQKVREKLRITEEQYRIEADVTKPIKPALKSAEVELKTGGNNSNQVSETDEKEDLLHENRLMQDEIARLRLEKDTIKNQNLEKKYLKDFEIVKRKHEDLQKALKRNEETLAETIACYSGQLAALTDENTTLRSKLEKQRESGQRLETEMQSYRCRLNAALCDHDQSHSSKRDQELAFQGTVDKCCHLQENLNSHVLILSLQLSKAESKFRVLETELHYTGEALKEKALVFEHVQSELKQKQSQMKDIEKMYKSGYNTMEKCIEKQERFCQLKKQNMLLQQQLDDARNKADNQEKAILNIQARCDARVENLQAECRKHRLLLEEDNKMLVNELNHSKEKKCQYEKEKAEREVAVRQLQQKQDDVLNKRSATKALLDASSRHCIYLENGMQDSRKKLDQMRSQFQEIQDQLTATIRCTKEMEGDAQKLEVENVMMRKIIKKQDEQIERFEKILQHSSLMLQVFES</sequence>
<comment type="alternative products">
    <event type="alternative splicing"/>
    <isoform>
        <id>Q5JPF3-1</id>
        <name>1</name>
        <sequence type="displayed"/>
    </isoform>
    <isoform>
        <id>Q5JPF3-2</id>
        <name>2</name>
        <sequence type="described" ref="VSP_033675"/>
    </isoform>
    <isoform>
        <id>Q5JPF3-3</id>
        <name>3</name>
        <sequence type="described" ref="VSP_039672 VSP_039673 VSP_039674"/>
    </isoform>
</comment>
<comment type="similarity">
    <text evidence="5">Belongs to the ANKRD36 family.</text>
</comment>
<comment type="sequence caution" evidence="5">
    <conflict type="erroneous initiation">
        <sequence resource="EMBL-CDS" id="AAB02177"/>
    </conflict>
    <text>Extended N-terminus.</text>
</comment>
<comment type="sequence caution" evidence="5">
    <conflict type="miscellaneous discrepancy">
        <sequence resource="EMBL-CDS" id="AAB02177"/>
    </conflict>
    <text>Contaminating sequence. Potential poly-A sequence.</text>
</comment>
<comment type="sequence caution" evidence="5">
    <conflict type="erroneous gene model prediction">
        <sequence resource="EMBL-CDS" id="AAY24080"/>
    </conflict>
</comment>
<comment type="sequence caution" evidence="5">
    <conflict type="miscellaneous discrepancy">
        <sequence resource="EMBL-CDS" id="CAH56324"/>
    </conflict>
    <text>Contaminating sequence. Potential poly-A sequence.</text>
</comment>
<keyword id="KW-0025">Alternative splicing</keyword>
<keyword id="KW-0040">ANK repeat</keyword>
<keyword id="KW-0175">Coiled coil</keyword>
<keyword id="KW-0597">Phosphoprotein</keyword>
<keyword id="KW-1267">Proteomics identification</keyword>
<keyword id="KW-1185">Reference proteome</keyword>
<keyword id="KW-0677">Repeat</keyword>
<dbReference type="EMBL" id="AL832977">
    <property type="protein sequence ID" value="CAH56324.1"/>
    <property type="status" value="ALT_SEQ"/>
    <property type="molecule type" value="mRNA"/>
</dbReference>
<dbReference type="EMBL" id="AL832836">
    <property type="protein sequence ID" value="CAI46156.1"/>
    <property type="molecule type" value="mRNA"/>
</dbReference>
<dbReference type="EMBL" id="AC013272">
    <property type="status" value="NOT_ANNOTATED_CDS"/>
    <property type="molecule type" value="Genomic_DNA"/>
</dbReference>
<dbReference type="EMBL" id="AC073995">
    <property type="protein sequence ID" value="AAY24080.1"/>
    <property type="status" value="ALT_SEQ"/>
    <property type="molecule type" value="Genomic_DNA"/>
</dbReference>
<dbReference type="EMBL" id="AK123626">
    <property type="status" value="NOT_ANNOTATED_CDS"/>
    <property type="molecule type" value="mRNA"/>
</dbReference>
<dbReference type="EMBL" id="U28831">
    <property type="protein sequence ID" value="AAB02177.1"/>
    <property type="status" value="ALT_SEQ"/>
    <property type="molecule type" value="mRNA"/>
</dbReference>
<dbReference type="SMR" id="Q5JPF3"/>
<dbReference type="FunCoup" id="Q5JPF3">
    <property type="interactions" value="29"/>
</dbReference>
<dbReference type="IntAct" id="Q5JPF3">
    <property type="interactions" value="4"/>
</dbReference>
<dbReference type="STRING" id="9606.ENSP00000403302"/>
<dbReference type="GlyGen" id="Q5JPF3">
    <property type="glycosylation" value="3 sites, 1 O-linked glycan (3 sites)"/>
</dbReference>
<dbReference type="iPTMnet" id="Q5JPF3"/>
<dbReference type="PhosphoSitePlus" id="Q5JPF3"/>
<dbReference type="BioMuta" id="ANKRD36C"/>
<dbReference type="DMDM" id="302393829"/>
<dbReference type="jPOST" id="Q5JPF3"/>
<dbReference type="MassIVE" id="Q5JPF3"/>
<dbReference type="PaxDb" id="9606-ENSP00000403302"/>
<dbReference type="PeptideAtlas" id="Q5JPF3"/>
<dbReference type="ProteomicsDB" id="63012">
    <molecule id="Q5JPF3-1"/>
</dbReference>
<dbReference type="ProteomicsDB" id="63013">
    <molecule id="Q5JPF3-2"/>
</dbReference>
<dbReference type="ProteomicsDB" id="63014">
    <molecule id="Q5JPF3-3"/>
</dbReference>
<dbReference type="Antibodypedia" id="77805">
    <property type="antibodies" value="6 antibodies from 4 providers"/>
</dbReference>
<dbReference type="Ensembl" id="ENST00000456556.5">
    <molecule id="Q5JPF3-1"/>
    <property type="protein sequence ID" value="ENSP00000403302.1"/>
    <property type="gene ID" value="ENSG00000174501.15"/>
</dbReference>
<dbReference type="UCSC" id="uc061ltz.1">
    <molecule id="Q5JPF3-1"/>
    <property type="organism name" value="human"/>
</dbReference>
<dbReference type="AGR" id="HGNC:32946"/>
<dbReference type="GeneCards" id="ANKRD36C"/>
<dbReference type="HGNC" id="HGNC:32946">
    <property type="gene designation" value="ANKRD36C"/>
</dbReference>
<dbReference type="HPA" id="ENSG00000174501">
    <property type="expression patterns" value="Tissue enhanced (bone)"/>
</dbReference>
<dbReference type="neXtProt" id="NX_Q5JPF3"/>
<dbReference type="OpenTargets" id="ENSG00000174501"/>
<dbReference type="VEuPathDB" id="HostDB:ENSG00000174501"/>
<dbReference type="eggNOG" id="KOG0504">
    <property type="taxonomic scope" value="Eukaryota"/>
</dbReference>
<dbReference type="GeneTree" id="ENSGT00940000163264"/>
<dbReference type="HOGENOM" id="CLU_001111_2_1_1"/>
<dbReference type="InParanoid" id="Q5JPF3"/>
<dbReference type="OMA" id="CERRIVK"/>
<dbReference type="OrthoDB" id="9538085at2759"/>
<dbReference type="PAN-GO" id="Q5JPF3">
    <property type="GO annotations" value="0 GO annotations based on evolutionary models"/>
</dbReference>
<dbReference type="PhylomeDB" id="Q5JPF3"/>
<dbReference type="TreeFam" id="TF333496"/>
<dbReference type="PathwayCommons" id="Q5JPF3"/>
<dbReference type="SignaLink" id="Q5JPF3"/>
<dbReference type="ChiTaRS" id="ANKRD36C">
    <property type="organism name" value="human"/>
</dbReference>
<dbReference type="Pharos" id="Q5JPF3">
    <property type="development level" value="Tdark"/>
</dbReference>
<dbReference type="PRO" id="PR:Q5JPF3"/>
<dbReference type="Proteomes" id="UP000005640">
    <property type="component" value="Chromosome 2"/>
</dbReference>
<dbReference type="RNAct" id="Q5JPF3">
    <property type="molecule type" value="protein"/>
</dbReference>
<dbReference type="Bgee" id="ENSG00000174501">
    <property type="expression patterns" value="Expressed in corpus callosum and 105 other cell types or tissues"/>
</dbReference>
<dbReference type="ExpressionAtlas" id="Q5JPF3">
    <property type="expression patterns" value="baseline and differential"/>
</dbReference>
<dbReference type="GO" id="GO:0008200">
    <property type="term" value="F:ion channel inhibitor activity"/>
    <property type="evidence" value="ECO:0000303"/>
    <property type="project" value="UniProtKB"/>
</dbReference>
<dbReference type="Gene3D" id="1.25.40.20">
    <property type="entry name" value="Ankyrin repeat-containing domain"/>
    <property type="match status" value="1"/>
</dbReference>
<dbReference type="InterPro" id="IPR050657">
    <property type="entry name" value="Ankyrin_repeat_domain"/>
</dbReference>
<dbReference type="InterPro" id="IPR002110">
    <property type="entry name" value="Ankyrin_rpt"/>
</dbReference>
<dbReference type="InterPro" id="IPR036770">
    <property type="entry name" value="Ankyrin_rpt-contain_sf"/>
</dbReference>
<dbReference type="InterPro" id="IPR039497">
    <property type="entry name" value="CC144C-like_CC_dom"/>
</dbReference>
<dbReference type="PANTHER" id="PTHR24147">
    <property type="entry name" value="ANKYRIN REPEAT DOMAIN 36-RELATED"/>
    <property type="match status" value="1"/>
</dbReference>
<dbReference type="PANTHER" id="PTHR24147:SF71">
    <property type="entry name" value="ANKYRIN REPEAT DOMAIN-CONTAINING PROTEIN 36C"/>
    <property type="match status" value="1"/>
</dbReference>
<dbReference type="Pfam" id="PF00023">
    <property type="entry name" value="Ank"/>
    <property type="match status" value="1"/>
</dbReference>
<dbReference type="Pfam" id="PF12796">
    <property type="entry name" value="Ank_2"/>
    <property type="match status" value="1"/>
</dbReference>
<dbReference type="Pfam" id="PF13637">
    <property type="entry name" value="Ank_4"/>
    <property type="match status" value="1"/>
</dbReference>
<dbReference type="Pfam" id="PF14915">
    <property type="entry name" value="CCDC144C"/>
    <property type="match status" value="2"/>
</dbReference>
<dbReference type="SMART" id="SM00248">
    <property type="entry name" value="ANK"/>
    <property type="match status" value="6"/>
</dbReference>
<dbReference type="SUPFAM" id="SSF48403">
    <property type="entry name" value="Ankyrin repeat"/>
    <property type="match status" value="1"/>
</dbReference>
<dbReference type="PROSITE" id="PS50297">
    <property type="entry name" value="ANK_REP_REGION"/>
    <property type="match status" value="1"/>
</dbReference>
<dbReference type="PROSITE" id="PS50088">
    <property type="entry name" value="ANK_REPEAT"/>
    <property type="match status" value="5"/>
</dbReference>
<reference key="1">
    <citation type="journal article" date="2007" name="BMC Genomics">
        <title>The full-ORF clone resource of the German cDNA consortium.</title>
        <authorList>
            <person name="Bechtel S."/>
            <person name="Rosenfelder H."/>
            <person name="Duda A."/>
            <person name="Schmidt C.P."/>
            <person name="Ernst U."/>
            <person name="Wellenreuther R."/>
            <person name="Mehrle A."/>
            <person name="Schuster C."/>
            <person name="Bahr A."/>
            <person name="Bloecker H."/>
            <person name="Heubner D."/>
            <person name="Hoerlein A."/>
            <person name="Michel G."/>
            <person name="Wedler H."/>
            <person name="Koehrer K."/>
            <person name="Ottenwaelder B."/>
            <person name="Poustka A."/>
            <person name="Wiemann S."/>
            <person name="Schupp I."/>
        </authorList>
    </citation>
    <scope>NUCLEOTIDE SEQUENCE [LARGE SCALE MRNA] (ISOFORM 3)</scope>
    <scope>NUCLEOTIDE SEQUENCE [LARGE SCALE MRNA] OF 1-1275 (ISOFORM 2)</scope>
    <source>
        <tissue>Lymph node</tissue>
        <tissue>Stomach</tissue>
    </source>
</reference>
<reference key="2">
    <citation type="journal article" date="2005" name="Nature">
        <title>Generation and annotation of the DNA sequences of human chromosomes 2 and 4.</title>
        <authorList>
            <person name="Hillier L.W."/>
            <person name="Graves T.A."/>
            <person name="Fulton R.S."/>
            <person name="Fulton L.A."/>
            <person name="Pepin K.H."/>
            <person name="Minx P."/>
            <person name="Wagner-McPherson C."/>
            <person name="Layman D."/>
            <person name="Wylie K."/>
            <person name="Sekhon M."/>
            <person name="Becker M.C."/>
            <person name="Fewell G.A."/>
            <person name="Delehaunty K.D."/>
            <person name="Miner T.L."/>
            <person name="Nash W.E."/>
            <person name="Kremitzki C."/>
            <person name="Oddy L."/>
            <person name="Du H."/>
            <person name="Sun H."/>
            <person name="Bradshaw-Cordum H."/>
            <person name="Ali J."/>
            <person name="Carter J."/>
            <person name="Cordes M."/>
            <person name="Harris A."/>
            <person name="Isak A."/>
            <person name="van Brunt A."/>
            <person name="Nguyen C."/>
            <person name="Du F."/>
            <person name="Courtney L."/>
            <person name="Kalicki J."/>
            <person name="Ozersky P."/>
            <person name="Abbott S."/>
            <person name="Armstrong J."/>
            <person name="Belter E.A."/>
            <person name="Caruso L."/>
            <person name="Cedroni M."/>
            <person name="Cotton M."/>
            <person name="Davidson T."/>
            <person name="Desai A."/>
            <person name="Elliott G."/>
            <person name="Erb T."/>
            <person name="Fronick C."/>
            <person name="Gaige T."/>
            <person name="Haakenson W."/>
            <person name="Haglund K."/>
            <person name="Holmes A."/>
            <person name="Harkins R."/>
            <person name="Kim K."/>
            <person name="Kruchowski S.S."/>
            <person name="Strong C.M."/>
            <person name="Grewal N."/>
            <person name="Goyea E."/>
            <person name="Hou S."/>
            <person name="Levy A."/>
            <person name="Martinka S."/>
            <person name="Mead K."/>
            <person name="McLellan M.D."/>
            <person name="Meyer R."/>
            <person name="Randall-Maher J."/>
            <person name="Tomlinson C."/>
            <person name="Dauphin-Kohlberg S."/>
            <person name="Kozlowicz-Reilly A."/>
            <person name="Shah N."/>
            <person name="Swearengen-Shahid S."/>
            <person name="Snider J."/>
            <person name="Strong J.T."/>
            <person name="Thompson J."/>
            <person name="Yoakum M."/>
            <person name="Leonard S."/>
            <person name="Pearman C."/>
            <person name="Trani L."/>
            <person name="Radionenko M."/>
            <person name="Waligorski J.E."/>
            <person name="Wang C."/>
            <person name="Rock S.M."/>
            <person name="Tin-Wollam A.-M."/>
            <person name="Maupin R."/>
            <person name="Latreille P."/>
            <person name="Wendl M.C."/>
            <person name="Yang S.-P."/>
            <person name="Pohl C."/>
            <person name="Wallis J.W."/>
            <person name="Spieth J."/>
            <person name="Bieri T.A."/>
            <person name="Berkowicz N."/>
            <person name="Nelson J.O."/>
            <person name="Osborne J."/>
            <person name="Ding L."/>
            <person name="Meyer R."/>
            <person name="Sabo A."/>
            <person name="Shotland Y."/>
            <person name="Sinha P."/>
            <person name="Wohldmann P.E."/>
            <person name="Cook L.L."/>
            <person name="Hickenbotham M.T."/>
            <person name="Eldred J."/>
            <person name="Williams D."/>
            <person name="Jones T.A."/>
            <person name="She X."/>
            <person name="Ciccarelli F.D."/>
            <person name="Izaurralde E."/>
            <person name="Taylor J."/>
            <person name="Schmutz J."/>
            <person name="Myers R.M."/>
            <person name="Cox D.R."/>
            <person name="Huang X."/>
            <person name="McPherson J.D."/>
            <person name="Mardis E.R."/>
            <person name="Clifton S.W."/>
            <person name="Warren W.C."/>
            <person name="Chinwalla A.T."/>
            <person name="Eddy S.R."/>
            <person name="Marra M.A."/>
            <person name="Ovcharenko I."/>
            <person name="Furey T.S."/>
            <person name="Miller W."/>
            <person name="Eichler E.E."/>
            <person name="Bork P."/>
            <person name="Suyama M."/>
            <person name="Torrents D."/>
            <person name="Waterston R.H."/>
            <person name="Wilson R.K."/>
        </authorList>
    </citation>
    <scope>NUCLEOTIDE SEQUENCE [LARGE SCALE GENOMIC DNA]</scope>
</reference>
<reference key="3">
    <citation type="journal article" date="2004" name="Nat. Genet.">
        <title>Complete sequencing and characterization of 21,243 full-length human cDNAs.</title>
        <authorList>
            <person name="Ota T."/>
            <person name="Suzuki Y."/>
            <person name="Nishikawa T."/>
            <person name="Otsuki T."/>
            <person name="Sugiyama T."/>
            <person name="Irie R."/>
            <person name="Wakamatsu A."/>
            <person name="Hayashi K."/>
            <person name="Sato H."/>
            <person name="Nagai K."/>
            <person name="Kimura K."/>
            <person name="Makita H."/>
            <person name="Sekine M."/>
            <person name="Obayashi M."/>
            <person name="Nishi T."/>
            <person name="Shibahara T."/>
            <person name="Tanaka T."/>
            <person name="Ishii S."/>
            <person name="Yamamoto J."/>
            <person name="Saito K."/>
            <person name="Kawai Y."/>
            <person name="Isono Y."/>
            <person name="Nakamura Y."/>
            <person name="Nagahari K."/>
            <person name="Murakami K."/>
            <person name="Yasuda T."/>
            <person name="Iwayanagi T."/>
            <person name="Wagatsuma M."/>
            <person name="Shiratori A."/>
            <person name="Sudo H."/>
            <person name="Hosoiri T."/>
            <person name="Kaku Y."/>
            <person name="Kodaira H."/>
            <person name="Kondo H."/>
            <person name="Sugawara M."/>
            <person name="Takahashi M."/>
            <person name="Kanda K."/>
            <person name="Yokoi T."/>
            <person name="Furuya T."/>
            <person name="Kikkawa E."/>
            <person name="Omura Y."/>
            <person name="Abe K."/>
            <person name="Kamihara K."/>
            <person name="Katsuta N."/>
            <person name="Sato K."/>
            <person name="Tanikawa M."/>
            <person name="Yamazaki M."/>
            <person name="Ninomiya K."/>
            <person name="Ishibashi T."/>
            <person name="Yamashita H."/>
            <person name="Murakawa K."/>
            <person name="Fujimori K."/>
            <person name="Tanai H."/>
            <person name="Kimata M."/>
            <person name="Watanabe M."/>
            <person name="Hiraoka S."/>
            <person name="Chiba Y."/>
            <person name="Ishida S."/>
            <person name="Ono Y."/>
            <person name="Takiguchi S."/>
            <person name="Watanabe S."/>
            <person name="Yosida M."/>
            <person name="Hotuta T."/>
            <person name="Kusano J."/>
            <person name="Kanehori K."/>
            <person name="Takahashi-Fujii A."/>
            <person name="Hara H."/>
            <person name="Tanase T.-O."/>
            <person name="Nomura Y."/>
            <person name="Togiya S."/>
            <person name="Komai F."/>
            <person name="Hara R."/>
            <person name="Takeuchi K."/>
            <person name="Arita M."/>
            <person name="Imose N."/>
            <person name="Musashino K."/>
            <person name="Yuuki H."/>
            <person name="Oshima A."/>
            <person name="Sasaki N."/>
            <person name="Aotsuka S."/>
            <person name="Yoshikawa Y."/>
            <person name="Matsunawa H."/>
            <person name="Ichihara T."/>
            <person name="Shiohata N."/>
            <person name="Sano S."/>
            <person name="Moriya S."/>
            <person name="Momiyama H."/>
            <person name="Satoh N."/>
            <person name="Takami S."/>
            <person name="Terashima Y."/>
            <person name="Suzuki O."/>
            <person name="Nakagawa S."/>
            <person name="Senoh A."/>
            <person name="Mizoguchi H."/>
            <person name="Goto Y."/>
            <person name="Shimizu F."/>
            <person name="Wakebe H."/>
            <person name="Hishigaki H."/>
            <person name="Watanabe T."/>
            <person name="Sugiyama A."/>
            <person name="Takemoto M."/>
            <person name="Kawakami B."/>
            <person name="Yamazaki M."/>
            <person name="Watanabe K."/>
            <person name="Kumagai A."/>
            <person name="Itakura S."/>
            <person name="Fukuzumi Y."/>
            <person name="Fujimori Y."/>
            <person name="Komiyama M."/>
            <person name="Tashiro H."/>
            <person name="Tanigami A."/>
            <person name="Fujiwara T."/>
            <person name="Ono T."/>
            <person name="Yamada K."/>
            <person name="Fujii Y."/>
            <person name="Ozaki K."/>
            <person name="Hirao M."/>
            <person name="Ohmori Y."/>
            <person name="Kawabata A."/>
            <person name="Hikiji T."/>
            <person name="Kobatake N."/>
            <person name="Inagaki H."/>
            <person name="Ikema Y."/>
            <person name="Okamoto S."/>
            <person name="Okitani R."/>
            <person name="Kawakami T."/>
            <person name="Noguchi S."/>
            <person name="Itoh T."/>
            <person name="Shigeta K."/>
            <person name="Senba T."/>
            <person name="Matsumura K."/>
            <person name="Nakajima Y."/>
            <person name="Mizuno T."/>
            <person name="Morinaga M."/>
            <person name="Sasaki M."/>
            <person name="Togashi T."/>
            <person name="Oyama M."/>
            <person name="Hata H."/>
            <person name="Watanabe M."/>
            <person name="Komatsu T."/>
            <person name="Mizushima-Sugano J."/>
            <person name="Satoh T."/>
            <person name="Shirai Y."/>
            <person name="Takahashi Y."/>
            <person name="Nakagawa K."/>
            <person name="Okumura K."/>
            <person name="Nagase T."/>
            <person name="Nomura N."/>
            <person name="Kikuchi H."/>
            <person name="Masuho Y."/>
            <person name="Yamashita R."/>
            <person name="Nakai K."/>
            <person name="Yada T."/>
            <person name="Nakamura Y."/>
            <person name="Ohara O."/>
            <person name="Isogai T."/>
            <person name="Sugano S."/>
        </authorList>
    </citation>
    <scope>NUCLEOTIDE SEQUENCE [LARGE SCALE MRNA] OF 1-1418 (ISOFORM 2)</scope>
</reference>
<reference key="4">
    <citation type="journal article" date="1995" name="Proc. Assoc. Am. Physicians">
        <title>Inhibitors of renal epithelial phosphate transport in tumor-induced osteomalacia and uremia.</title>
        <authorList>
            <person name="Kumar R."/>
            <person name="Haugen J.D."/>
            <person name="Wieben E.D."/>
            <person name="Londowski J.M."/>
            <person name="Cai Q."/>
        </authorList>
    </citation>
    <scope>NUCLEOTIDE SEQUENCE [MRNA] OF 935-1305 (ISOFORM 1)</scope>
</reference>
<reference key="5">
    <citation type="journal article" date="2013" name="J. Proteome Res.">
        <title>Toward a comprehensive characterization of a human cancer cell phosphoproteome.</title>
        <authorList>
            <person name="Zhou H."/>
            <person name="Di Palma S."/>
            <person name="Preisinger C."/>
            <person name="Peng M."/>
            <person name="Polat A.N."/>
            <person name="Heck A.J."/>
            <person name="Mohammed S."/>
        </authorList>
    </citation>
    <scope>PHOSPHORYLATION [LARGE SCALE ANALYSIS] AT SER-829 AND SER-897</scope>
    <scope>IDENTIFICATION BY MASS SPECTROMETRY [LARGE SCALE ANALYSIS]</scope>
    <source>
        <tissue>Erythroleukemia</tissue>
    </source>
</reference>
<organism>
    <name type="scientific">Homo sapiens</name>
    <name type="common">Human</name>
    <dbReference type="NCBI Taxonomy" id="9606"/>
    <lineage>
        <taxon>Eukaryota</taxon>
        <taxon>Metazoa</taxon>
        <taxon>Chordata</taxon>
        <taxon>Craniata</taxon>
        <taxon>Vertebrata</taxon>
        <taxon>Euteleostomi</taxon>
        <taxon>Mammalia</taxon>
        <taxon>Eutheria</taxon>
        <taxon>Euarchontoglires</taxon>
        <taxon>Primates</taxon>
        <taxon>Haplorrhini</taxon>
        <taxon>Catarrhini</taxon>
        <taxon>Hominidae</taxon>
        <taxon>Homo</taxon>
    </lineage>
</organism>
<protein>
    <recommendedName>
        <fullName>Ankyrin repeat domain-containing protein 36C</fullName>
    </recommendedName>
    <alternativeName>
        <fullName>Protein immuno-reactive with anti-PTH polyclonal antibodies</fullName>
    </alternativeName>
</protein>
<proteinExistence type="evidence at protein level"/>
<evidence type="ECO:0000255" key="1"/>
<evidence type="ECO:0000256" key="2">
    <source>
        <dbReference type="SAM" id="MobiDB-lite"/>
    </source>
</evidence>
<evidence type="ECO:0000303" key="3">
    <source>
    </source>
</evidence>
<evidence type="ECO:0000303" key="4">
    <source>
    </source>
</evidence>
<evidence type="ECO:0000305" key="5"/>
<evidence type="ECO:0007744" key="6">
    <source>
    </source>
</evidence>
<gene>
    <name type="primary">ANKRD36C</name>
</gene>
<accession>Q5JPF3</accession>
<accession>C9JZ08</accession>
<accession>Q15694</accession>
<accession>Q53S06</accession>
<accession>Q658V2</accession>
<name>AN36C_HUMAN</name>
<feature type="chain" id="PRO_0000334545" description="Ankyrin repeat domain-containing protein 36C">
    <location>
        <begin position="1"/>
        <end position="1778"/>
    </location>
</feature>
<feature type="repeat" description="ANK 1">
    <location>
        <begin position="64"/>
        <end position="93"/>
    </location>
</feature>
<feature type="repeat" description="ANK 2">
    <location>
        <begin position="97"/>
        <end position="126"/>
    </location>
</feature>
<feature type="repeat" description="ANK 3">
    <location>
        <begin position="130"/>
        <end position="159"/>
    </location>
</feature>
<feature type="repeat" description="ANK 4">
    <location>
        <begin position="163"/>
        <end position="192"/>
    </location>
</feature>
<feature type="repeat" description="ANK 5">
    <location>
        <begin position="196"/>
        <end position="225"/>
    </location>
</feature>
<feature type="region of interest" description="Disordered" evidence="2">
    <location>
        <begin position="260"/>
        <end position="365"/>
    </location>
</feature>
<feature type="region of interest" description="Disordered" evidence="2">
    <location>
        <begin position="501"/>
        <end position="526"/>
    </location>
</feature>
<feature type="region of interest" description="Disordered" evidence="2">
    <location>
        <begin position="538"/>
        <end position="653"/>
    </location>
</feature>
<feature type="region of interest" description="Disordered" evidence="2">
    <location>
        <begin position="671"/>
        <end position="1027"/>
    </location>
</feature>
<feature type="region of interest" description="Disordered" evidence="2">
    <location>
        <begin position="1051"/>
        <end position="1072"/>
    </location>
</feature>
<feature type="coiled-coil region" evidence="1">
    <location>
        <begin position="1157"/>
        <end position="1187"/>
    </location>
</feature>
<feature type="coiled-coil region" evidence="1">
    <location>
        <begin position="1247"/>
        <end position="1333"/>
    </location>
</feature>
<feature type="coiled-coil region" evidence="1">
    <location>
        <begin position="1362"/>
        <end position="1480"/>
    </location>
</feature>
<feature type="coiled-coil region" evidence="1">
    <location>
        <begin position="1544"/>
        <end position="1768"/>
    </location>
</feature>
<feature type="compositionally biased region" description="Polar residues" evidence="2">
    <location>
        <begin position="261"/>
        <end position="272"/>
    </location>
</feature>
<feature type="compositionally biased region" description="Polar residues" evidence="2">
    <location>
        <begin position="297"/>
        <end position="306"/>
    </location>
</feature>
<feature type="compositionally biased region" description="Low complexity" evidence="2">
    <location>
        <begin position="539"/>
        <end position="555"/>
    </location>
</feature>
<feature type="compositionally biased region" description="Basic and acidic residues" evidence="2">
    <location>
        <begin position="585"/>
        <end position="596"/>
    </location>
</feature>
<feature type="compositionally biased region" description="Basic and acidic residues" evidence="2">
    <location>
        <begin position="619"/>
        <end position="630"/>
    </location>
</feature>
<feature type="compositionally biased region" description="Polar residues" evidence="2">
    <location>
        <begin position="631"/>
        <end position="653"/>
    </location>
</feature>
<feature type="compositionally biased region" description="Polar residues" evidence="2">
    <location>
        <begin position="679"/>
        <end position="691"/>
    </location>
</feature>
<feature type="compositionally biased region" description="Basic and acidic residues" evidence="2">
    <location>
        <begin position="794"/>
        <end position="813"/>
    </location>
</feature>
<feature type="compositionally biased region" description="Basic and acidic residues" evidence="2">
    <location>
        <begin position="840"/>
        <end position="849"/>
    </location>
</feature>
<feature type="compositionally biased region" description="Basic and acidic residues" evidence="2">
    <location>
        <begin position="862"/>
        <end position="881"/>
    </location>
</feature>
<feature type="compositionally biased region" description="Basic and acidic residues" evidence="2">
    <location>
        <begin position="907"/>
        <end position="917"/>
    </location>
</feature>
<feature type="compositionally biased region" description="Basic residues" evidence="2">
    <location>
        <begin position="942"/>
        <end position="955"/>
    </location>
</feature>
<feature type="compositionally biased region" description="Polar residues" evidence="2">
    <location>
        <begin position="983"/>
        <end position="992"/>
    </location>
</feature>
<feature type="compositionally biased region" description="Polar residues" evidence="2">
    <location>
        <begin position="1005"/>
        <end position="1026"/>
    </location>
</feature>
<feature type="modified residue" description="Phosphoserine" evidence="6">
    <location>
        <position position="829"/>
    </location>
</feature>
<feature type="modified residue" description="Phosphoserine" evidence="6">
    <location>
        <position position="897"/>
    </location>
</feature>
<feature type="splice variant" id="VSP_033675" description="In isoform 2." evidence="3 4">
    <location>
        <begin position="1"/>
        <end position="973"/>
    </location>
</feature>
<feature type="splice variant" id="VSP_039672" description="In isoform 3." evidence="4">
    <location>
        <begin position="1"/>
        <end position="567"/>
    </location>
</feature>
<feature type="splice variant" id="VSP_039673" description="In isoform 3." evidence="4">
    <original>VKNQI</original>
    <variation>IVFTY</variation>
    <location>
        <begin position="1181"/>
        <end position="1185"/>
    </location>
</feature>
<feature type="splice variant" id="VSP_039674" description="In isoform 3." evidence="4">
    <location>
        <begin position="1186"/>
        <end position="1778"/>
    </location>
</feature>
<feature type="sequence conflict" description="In Ref. 1; CAH56324/CAI46156, 3; AK123626 and 4; AAB02177." evidence="5" ref="1 3 4">
    <original>L</original>
    <variation>P</variation>
    <location>
        <position position="1027"/>
    </location>
</feature>
<feature type="sequence conflict" description="In Ref. 1; CAH56324/CAI46156 and 3; AK123626." evidence="5" ref="1 3">
    <original>G</original>
    <variation>S</variation>
    <location>
        <position position="1117"/>
    </location>
</feature>
<feature type="sequence conflict" description="In Ref. 1; CAH56324." evidence="5" ref="1">
    <original>R</original>
    <variation>K</variation>
    <location>
        <position position="1309"/>
    </location>
</feature>
<feature type="sequence conflict" description="In Ref. 3; AK123626." evidence="5" ref="3">
    <original>L</original>
    <variation>V</variation>
    <location>
        <position position="1315"/>
    </location>
</feature>